<accession>A4Y0K7</accession>
<protein>
    <recommendedName>
        <fullName>UPF0758 protein Pmen_4376</fullName>
    </recommendedName>
</protein>
<gene>
    <name type="ordered locus">Pmen_4376</name>
</gene>
<dbReference type="EMBL" id="CP000680">
    <property type="protein sequence ID" value="ABP87123.1"/>
    <property type="molecule type" value="Genomic_DNA"/>
</dbReference>
<dbReference type="SMR" id="A4Y0K7"/>
<dbReference type="STRING" id="399739.Pmen_4376"/>
<dbReference type="KEGG" id="pmy:Pmen_4376"/>
<dbReference type="PATRIC" id="fig|399739.8.peg.4433"/>
<dbReference type="eggNOG" id="COG2003">
    <property type="taxonomic scope" value="Bacteria"/>
</dbReference>
<dbReference type="HOGENOM" id="CLU_073529_0_1_6"/>
<dbReference type="OrthoDB" id="9804482at2"/>
<dbReference type="GO" id="GO:0046872">
    <property type="term" value="F:metal ion binding"/>
    <property type="evidence" value="ECO:0007669"/>
    <property type="project" value="UniProtKB-KW"/>
</dbReference>
<dbReference type="GO" id="GO:0008237">
    <property type="term" value="F:metallopeptidase activity"/>
    <property type="evidence" value="ECO:0007669"/>
    <property type="project" value="UniProtKB-KW"/>
</dbReference>
<dbReference type="GO" id="GO:0006508">
    <property type="term" value="P:proteolysis"/>
    <property type="evidence" value="ECO:0007669"/>
    <property type="project" value="UniProtKB-KW"/>
</dbReference>
<dbReference type="CDD" id="cd08071">
    <property type="entry name" value="MPN_DUF2466"/>
    <property type="match status" value="1"/>
</dbReference>
<dbReference type="FunFam" id="3.40.140.10:FF:000032">
    <property type="entry name" value="DNA repair protein RadC"/>
    <property type="match status" value="1"/>
</dbReference>
<dbReference type="Gene3D" id="1.10.150.20">
    <property type="entry name" value="5' to 3' exonuclease, C-terminal subdomain"/>
    <property type="match status" value="1"/>
</dbReference>
<dbReference type="Gene3D" id="3.40.140.10">
    <property type="entry name" value="Cytidine Deaminase, domain 2"/>
    <property type="match status" value="1"/>
</dbReference>
<dbReference type="InterPro" id="IPR037518">
    <property type="entry name" value="MPN"/>
</dbReference>
<dbReference type="InterPro" id="IPR025657">
    <property type="entry name" value="RadC_JAB"/>
</dbReference>
<dbReference type="InterPro" id="IPR010994">
    <property type="entry name" value="RuvA_2-like"/>
</dbReference>
<dbReference type="InterPro" id="IPR001405">
    <property type="entry name" value="UPF0758"/>
</dbReference>
<dbReference type="InterPro" id="IPR020891">
    <property type="entry name" value="UPF0758_CS"/>
</dbReference>
<dbReference type="InterPro" id="IPR046778">
    <property type="entry name" value="UPF0758_N"/>
</dbReference>
<dbReference type="NCBIfam" id="NF000642">
    <property type="entry name" value="PRK00024.1"/>
    <property type="match status" value="1"/>
</dbReference>
<dbReference type="NCBIfam" id="TIGR00608">
    <property type="entry name" value="radc"/>
    <property type="match status" value="1"/>
</dbReference>
<dbReference type="PANTHER" id="PTHR30471">
    <property type="entry name" value="DNA REPAIR PROTEIN RADC"/>
    <property type="match status" value="1"/>
</dbReference>
<dbReference type="PANTHER" id="PTHR30471:SF3">
    <property type="entry name" value="UPF0758 PROTEIN YEES-RELATED"/>
    <property type="match status" value="1"/>
</dbReference>
<dbReference type="Pfam" id="PF04002">
    <property type="entry name" value="RadC"/>
    <property type="match status" value="1"/>
</dbReference>
<dbReference type="Pfam" id="PF20582">
    <property type="entry name" value="UPF0758_N"/>
    <property type="match status" value="1"/>
</dbReference>
<dbReference type="SUPFAM" id="SSF102712">
    <property type="entry name" value="JAB1/MPN domain"/>
    <property type="match status" value="1"/>
</dbReference>
<dbReference type="SUPFAM" id="SSF47781">
    <property type="entry name" value="RuvA domain 2-like"/>
    <property type="match status" value="1"/>
</dbReference>
<dbReference type="PROSITE" id="PS50249">
    <property type="entry name" value="MPN"/>
    <property type="match status" value="1"/>
</dbReference>
<dbReference type="PROSITE" id="PS01302">
    <property type="entry name" value="UPF0758"/>
    <property type="match status" value="1"/>
</dbReference>
<keyword id="KW-0378">Hydrolase</keyword>
<keyword id="KW-0479">Metal-binding</keyword>
<keyword id="KW-0482">Metalloprotease</keyword>
<keyword id="KW-0645">Protease</keyword>
<keyword id="KW-0862">Zinc</keyword>
<name>Y4376_ECTM1</name>
<organism>
    <name type="scientific">Ectopseudomonas mendocina (strain ymp)</name>
    <name type="common">Pseudomonas mendocina</name>
    <dbReference type="NCBI Taxonomy" id="399739"/>
    <lineage>
        <taxon>Bacteria</taxon>
        <taxon>Pseudomonadati</taxon>
        <taxon>Pseudomonadota</taxon>
        <taxon>Gammaproteobacteria</taxon>
        <taxon>Pseudomonadales</taxon>
        <taxon>Pseudomonadaceae</taxon>
        <taxon>Ectopseudomonas</taxon>
    </lineage>
</organism>
<comment type="similarity">
    <text evidence="2">Belongs to the UPF0758 family.</text>
</comment>
<proteinExistence type="inferred from homology"/>
<sequence length="224" mass="24714">MSIRDWPAAERPREKLLAQGAAALTDAELLAIFLRTGVAGCSAVDLARRLLAEFGSLRALLEAELPDFSQHLGLGPAKYAQLQAVLEMARRHLAERLRRDSALESPQAVRDYLKAQLRHEPHEVFGCLFLDAKHRVLAFEVLFRGSIDSASVYPRQVVKRALANNAAAVILTHNHPSGVCEPSQADRVLTQRLKDALALVEVRVLDHFIVGDGEPLSMAELGWM</sequence>
<evidence type="ECO:0000255" key="1">
    <source>
        <dbReference type="PROSITE-ProRule" id="PRU01182"/>
    </source>
</evidence>
<evidence type="ECO:0000305" key="2"/>
<feature type="chain" id="PRO_1000001681" description="UPF0758 protein Pmen_4376">
    <location>
        <begin position="1"/>
        <end position="224"/>
    </location>
</feature>
<feature type="domain" description="MPN" evidence="1">
    <location>
        <begin position="102"/>
        <end position="224"/>
    </location>
</feature>
<feature type="short sequence motif" description="JAMM motif" evidence="1">
    <location>
        <begin position="173"/>
        <end position="186"/>
    </location>
</feature>
<feature type="binding site" evidence="1">
    <location>
        <position position="173"/>
    </location>
    <ligand>
        <name>Zn(2+)</name>
        <dbReference type="ChEBI" id="CHEBI:29105"/>
        <note>catalytic</note>
    </ligand>
</feature>
<feature type="binding site" evidence="1">
    <location>
        <position position="175"/>
    </location>
    <ligand>
        <name>Zn(2+)</name>
        <dbReference type="ChEBI" id="CHEBI:29105"/>
        <note>catalytic</note>
    </ligand>
</feature>
<feature type="binding site" evidence="1">
    <location>
        <position position="186"/>
    </location>
    <ligand>
        <name>Zn(2+)</name>
        <dbReference type="ChEBI" id="CHEBI:29105"/>
        <note>catalytic</note>
    </ligand>
</feature>
<reference key="1">
    <citation type="submission" date="2007-04" db="EMBL/GenBank/DDBJ databases">
        <title>Complete sequence of Pseudomonas mendocina ymp.</title>
        <authorList>
            <consortium name="US DOE Joint Genome Institute"/>
            <person name="Copeland A."/>
            <person name="Lucas S."/>
            <person name="Lapidus A."/>
            <person name="Barry K."/>
            <person name="Glavina del Rio T."/>
            <person name="Dalin E."/>
            <person name="Tice H."/>
            <person name="Pitluck S."/>
            <person name="Kiss H."/>
            <person name="Brettin T."/>
            <person name="Detter J.C."/>
            <person name="Bruce D."/>
            <person name="Han C."/>
            <person name="Schmutz J."/>
            <person name="Larimer F."/>
            <person name="Land M."/>
            <person name="Hauser L."/>
            <person name="Kyrpides N."/>
            <person name="Mikhailova N."/>
            <person name="Hersman L."/>
            <person name="Dubois J."/>
            <person name="Maurice P."/>
            <person name="Richardson P."/>
        </authorList>
    </citation>
    <scope>NUCLEOTIDE SEQUENCE [LARGE SCALE GENOMIC DNA]</scope>
    <source>
        <strain>ymp</strain>
    </source>
</reference>